<keyword id="KW-0150">Chloroplast</keyword>
<keyword id="KW-0456">Lyase</keyword>
<keyword id="KW-0934">Plastid</keyword>
<keyword id="KW-0663">Pyridoxal phosphate</keyword>
<keyword id="KW-0809">Transit peptide</keyword>
<protein>
    <recommendedName>
        <fullName evidence="5">Mimosinase, chloroplastic</fullName>
        <ecNumber evidence="3">4.3.3.8</ecNumber>
    </recommendedName>
</protein>
<proteinExistence type="evidence at protein level"/>
<comment type="function">
    <text evidence="3 4">Catalyzes the degradation of mimosine, which is a toxic secondary metabolite found in all Leucaena and Mimosa species.</text>
</comment>
<comment type="catalytic activity">
    <reaction evidence="3 4">
        <text>L-mimosine + H2O = 3-hydroxy-4H-pyrid-4-one + pyruvate + NH4(+)</text>
        <dbReference type="Rhea" id="RHEA:75355"/>
        <dbReference type="ChEBI" id="CHEBI:15361"/>
        <dbReference type="ChEBI" id="CHEBI:15377"/>
        <dbReference type="ChEBI" id="CHEBI:28630"/>
        <dbReference type="ChEBI" id="CHEBI:28938"/>
        <dbReference type="ChEBI" id="CHEBI:77689"/>
        <dbReference type="EC" id="4.3.3.8"/>
    </reaction>
    <physiologicalReaction direction="left-to-right" evidence="3 7">
        <dbReference type="Rhea" id="RHEA:75356"/>
    </physiologicalReaction>
</comment>
<comment type="cofactor">
    <cofactor evidence="3">
        <name>pyridoxal 5'-phosphate</name>
        <dbReference type="ChEBI" id="CHEBI:597326"/>
    </cofactor>
</comment>
<comment type="biophysicochemical properties">
    <kinetics>
        <KM evidence="3">116 uM for mimosine</KM>
        <Vmax evidence="3">51.0 umol/sec/mg enzyme with mimosine as substrate</Vmax>
    </kinetics>
    <phDependence>
        <text evidence="3">Optimum pH is 8.0.</text>
    </phDependence>
    <temperatureDependence>
        <text evidence="3">Optimum temperature is 37 degrees Celsius.</text>
    </temperatureDependence>
</comment>
<comment type="subunit">
    <text evidence="1">Forms homodimers. May form homotetramers from two homodimers.</text>
</comment>
<comment type="subcellular location">
    <subcellularLocation>
        <location evidence="3">Plastid</location>
        <location evidence="3">Chloroplast</location>
    </subcellularLocation>
</comment>
<comment type="similarity">
    <text evidence="6">Belongs to the trans-sulfuration enzymes family.</text>
</comment>
<name>MIMOS_LEULE</name>
<reference key="1">
    <citation type="submission" date="2007-03" db="EMBL/GenBank/DDBJ databases">
        <title>Plant mimosinase is homologous to cystathionine beta-lyase.</title>
        <authorList>
            <person name="Fukuta M."/>
            <person name="Moriwaki T."/>
            <person name="Kedashiro S."/>
            <person name="Tawata S."/>
        </authorList>
    </citation>
    <scope>NUCLEOTIDE SEQUENCE [MRNA]</scope>
</reference>
<reference key="2">
    <citation type="journal article" date="2014" name="Plant Physiol.">
        <title>A carbon-nitrogen lyase from Leucaena leucocephala catalyzes the first step of mimosine degradation.</title>
        <authorList>
            <person name="Negi V.S."/>
            <person name="Bingham J.P."/>
            <person name="Li Q.X."/>
            <person name="Borthakur D."/>
        </authorList>
    </citation>
    <scope>FUNCTION</scope>
    <scope>CATALYTIC ACTIVITY</scope>
    <scope>COFACTOR</scope>
    <scope>BIOPHYSICOCHEMICAL PROPERTIES</scope>
    <scope>SUBCELLULAR LOCATION</scope>
</reference>
<reference key="3">
    <citation type="journal article" date="2016" name="Methods Mol. Biol.">
        <title>Heterologous expression and characterization of mimosinase from Leucaena leucocephala.</title>
        <authorList>
            <person name="Negi V.S."/>
            <person name="Borthakur D."/>
        </authorList>
    </citation>
    <scope>FUNCTION</scope>
    <scope>CATALYTIC ACTIVITY</scope>
</reference>
<evidence type="ECO:0000250" key="1">
    <source>
        <dbReference type="UniProtKB" id="P53780"/>
    </source>
</evidence>
<evidence type="ECO:0000255" key="2"/>
<evidence type="ECO:0000269" key="3">
    <source>
    </source>
</evidence>
<evidence type="ECO:0000269" key="4">
    <source>
    </source>
</evidence>
<evidence type="ECO:0000303" key="5">
    <source>
    </source>
</evidence>
<evidence type="ECO:0000305" key="6"/>
<evidence type="ECO:0000305" key="7">
    <source>
    </source>
</evidence>
<dbReference type="EC" id="4.3.3.8" evidence="3"/>
<dbReference type="EMBL" id="AB298597">
    <property type="protein sequence ID" value="BAF80449.1"/>
    <property type="molecule type" value="mRNA"/>
</dbReference>
<dbReference type="SMR" id="A8CEI3"/>
<dbReference type="BRENDA" id="3.5.1.61">
    <property type="organism ID" value="2996"/>
</dbReference>
<dbReference type="GO" id="GO:0009507">
    <property type="term" value="C:chloroplast"/>
    <property type="evidence" value="ECO:0000314"/>
    <property type="project" value="UniProtKB"/>
</dbReference>
<dbReference type="GO" id="GO:0047804">
    <property type="term" value="F:cysteine-S-conjugate beta-lyase activity"/>
    <property type="evidence" value="ECO:0000314"/>
    <property type="project" value="UniProtKB"/>
</dbReference>
<dbReference type="GO" id="GO:0030170">
    <property type="term" value="F:pyridoxal phosphate binding"/>
    <property type="evidence" value="ECO:0000314"/>
    <property type="project" value="UniProtKB"/>
</dbReference>
<dbReference type="GO" id="GO:0019346">
    <property type="term" value="P:transsulfuration"/>
    <property type="evidence" value="ECO:0007669"/>
    <property type="project" value="InterPro"/>
</dbReference>
<dbReference type="CDD" id="cd00614">
    <property type="entry name" value="CGS_like"/>
    <property type="match status" value="1"/>
</dbReference>
<dbReference type="FunFam" id="3.40.640.10:FF:000046">
    <property type="entry name" value="Cystathionine gamma-lyase"/>
    <property type="match status" value="1"/>
</dbReference>
<dbReference type="Gene3D" id="3.90.1150.10">
    <property type="entry name" value="Aspartate Aminotransferase, domain 1"/>
    <property type="match status" value="1"/>
</dbReference>
<dbReference type="Gene3D" id="3.40.640.10">
    <property type="entry name" value="Type I PLP-dependent aspartate aminotransferase-like (Major domain)"/>
    <property type="match status" value="1"/>
</dbReference>
<dbReference type="InterPro" id="IPR000277">
    <property type="entry name" value="Cys/Met-Metab_PyrdxlP-dep_enz"/>
</dbReference>
<dbReference type="InterPro" id="IPR015424">
    <property type="entry name" value="PyrdxlP-dep_Trfase"/>
</dbReference>
<dbReference type="InterPro" id="IPR015421">
    <property type="entry name" value="PyrdxlP-dep_Trfase_major"/>
</dbReference>
<dbReference type="InterPro" id="IPR015422">
    <property type="entry name" value="PyrdxlP-dep_Trfase_small"/>
</dbReference>
<dbReference type="PANTHER" id="PTHR11808:SF50">
    <property type="entry name" value="CYSTATHIONINE BETA-LYASE"/>
    <property type="match status" value="1"/>
</dbReference>
<dbReference type="PANTHER" id="PTHR11808">
    <property type="entry name" value="TRANS-SULFURATION ENZYME FAMILY MEMBER"/>
    <property type="match status" value="1"/>
</dbReference>
<dbReference type="Pfam" id="PF01053">
    <property type="entry name" value="Cys_Met_Meta_PP"/>
    <property type="match status" value="1"/>
</dbReference>
<dbReference type="PIRSF" id="PIRSF001434">
    <property type="entry name" value="CGS"/>
    <property type="match status" value="1"/>
</dbReference>
<dbReference type="SUPFAM" id="SSF53383">
    <property type="entry name" value="PLP-dependent transferases"/>
    <property type="match status" value="1"/>
</dbReference>
<sequence>MALSSTFLNPLVSSVAVNPQPKITSGKGFRVNCLIRTQQTVIKTDTKENAAVLTPGKRVEKEPSVSTVLANYHADWDPFEATSTPIYQSATFRMKNATEYNEYYYSRVANPTTSTLEKIIAEIENAEYVTCFTSGMSALTAVCELVNPGDEILTVEDIYGGSYGFIENLMVRKAGITVKRVDTSNIENVKAAMTNKTKLVWLESPSNPQLKISDIREIARIAHAYGAIVFIDNCIMSPLLSHPLELGADIVMHSATKFIAGNSSCMAGSLATNNKELADKLLSYRSATGCGLSPQDAWICLEGIKTLPLRVEEKQKNALTVANYLDNNPKITKVNYPGLPDNPGYDLHKSQSKGPGSVMSCETGSLPLSKQIVEDTKFFSKIVGFGGVGSAICLPWYTSHKAIPEPEKIRMGITKDLIRISVGIEDVQDLIQDLDNAMSTPTF</sequence>
<feature type="transit peptide" description="Chloroplast" evidence="2">
    <location>
        <begin position="1"/>
        <end position="43"/>
    </location>
</feature>
<feature type="chain" id="PRO_0000460741" description="Mimosinase, chloroplastic">
    <location>
        <begin position="44"/>
        <end position="443"/>
    </location>
</feature>
<feature type="binding site" evidence="1">
    <location>
        <position position="105"/>
    </location>
    <ligand>
        <name>pyridoxal 5'-phosphate</name>
        <dbReference type="ChEBI" id="CHEBI:597326"/>
    </ligand>
</feature>
<feature type="binding site" evidence="1">
    <location>
        <position position="107"/>
    </location>
    <ligand>
        <name>pyridoxal 5'-phosphate</name>
        <dbReference type="ChEBI" id="CHEBI:597326"/>
    </ligand>
</feature>
<feature type="binding site" evidence="1">
    <location>
        <position position="135"/>
    </location>
    <ligand>
        <name>pyridoxal 5'-phosphate</name>
        <dbReference type="ChEBI" id="CHEBI:597326"/>
    </ligand>
</feature>
<feature type="binding site" evidence="1">
    <location>
        <position position="136"/>
    </location>
    <ligand>
        <name>pyridoxal 5'-phosphate</name>
        <dbReference type="ChEBI" id="CHEBI:597326"/>
    </ligand>
</feature>
<feature type="binding site" evidence="1">
    <location>
        <position position="254"/>
    </location>
    <ligand>
        <name>pyridoxal 5'-phosphate</name>
        <dbReference type="ChEBI" id="CHEBI:597326"/>
    </ligand>
</feature>
<feature type="binding site" evidence="1">
    <location>
        <position position="256"/>
    </location>
    <ligand>
        <name>pyridoxal 5'-phosphate</name>
        <dbReference type="ChEBI" id="CHEBI:597326"/>
    </ligand>
</feature>
<feature type="modified residue" description="N6-(pyridoxal phosphate)lysine" evidence="1">
    <location>
        <position position="257"/>
    </location>
</feature>
<organism>
    <name type="scientific">Leucaena leucocephala</name>
    <name type="common">White popinac</name>
    <name type="synonym">Leucaena glauca</name>
    <dbReference type="NCBI Taxonomy" id="3866"/>
    <lineage>
        <taxon>Eukaryota</taxon>
        <taxon>Viridiplantae</taxon>
        <taxon>Streptophyta</taxon>
        <taxon>Embryophyta</taxon>
        <taxon>Tracheophyta</taxon>
        <taxon>Spermatophyta</taxon>
        <taxon>Magnoliopsida</taxon>
        <taxon>eudicotyledons</taxon>
        <taxon>Gunneridae</taxon>
        <taxon>Pentapetalae</taxon>
        <taxon>rosids</taxon>
        <taxon>fabids</taxon>
        <taxon>Fabales</taxon>
        <taxon>Fabaceae</taxon>
        <taxon>Caesalpinioideae</taxon>
        <taxon>mimosoid clade</taxon>
        <taxon>Mimoseae</taxon>
        <taxon>Leucaena</taxon>
    </lineage>
</organism>
<accession>A8CEI3</accession>